<protein>
    <recommendedName>
        <fullName>Protein PAM1</fullName>
    </recommendedName>
</protein>
<reference key="1">
    <citation type="journal article" date="1994" name="J. Biol. Chem.">
        <title>Overexpression of yeast PAM1 gene permits survival without protein phosphatase 2A and induces a filamentous phenotype.</title>
        <authorList>
            <person name="Hu G.-Z."/>
            <person name="Ronne H."/>
        </authorList>
    </citation>
    <scope>NUCLEOTIDE SEQUENCE [GENOMIC DNA]</scope>
    <source>
        <strain>ATCC 208353 / W303-1A</strain>
    </source>
</reference>
<reference key="2">
    <citation type="journal article" date="1997" name="Nature">
        <title>The nucleotide sequence of Saccharomyces cerevisiae chromosome IV.</title>
        <authorList>
            <person name="Jacq C."/>
            <person name="Alt-Moerbe J."/>
            <person name="Andre B."/>
            <person name="Arnold W."/>
            <person name="Bahr A."/>
            <person name="Ballesta J.P.G."/>
            <person name="Bargues M."/>
            <person name="Baron L."/>
            <person name="Becker A."/>
            <person name="Biteau N."/>
            <person name="Bloecker H."/>
            <person name="Blugeon C."/>
            <person name="Boskovic J."/>
            <person name="Brandt P."/>
            <person name="Brueckner M."/>
            <person name="Buitrago M.J."/>
            <person name="Coster F."/>
            <person name="Delaveau T."/>
            <person name="del Rey F."/>
            <person name="Dujon B."/>
            <person name="Eide L.G."/>
            <person name="Garcia-Cantalejo J.M."/>
            <person name="Goffeau A."/>
            <person name="Gomez-Peris A."/>
            <person name="Granotier C."/>
            <person name="Hanemann V."/>
            <person name="Hankeln T."/>
            <person name="Hoheisel J.D."/>
            <person name="Jaeger W."/>
            <person name="Jimenez A."/>
            <person name="Jonniaux J.-L."/>
            <person name="Kraemer C."/>
            <person name="Kuester H."/>
            <person name="Laamanen P."/>
            <person name="Legros Y."/>
            <person name="Louis E.J."/>
            <person name="Moeller-Rieker S."/>
            <person name="Monnet A."/>
            <person name="Moro M."/>
            <person name="Mueller-Auer S."/>
            <person name="Nussbaumer B."/>
            <person name="Paricio N."/>
            <person name="Paulin L."/>
            <person name="Perea J."/>
            <person name="Perez-Alonso M."/>
            <person name="Perez-Ortin J.E."/>
            <person name="Pohl T.M."/>
            <person name="Prydz H."/>
            <person name="Purnelle B."/>
            <person name="Rasmussen S.W."/>
            <person name="Remacha M.A."/>
            <person name="Revuelta J.L."/>
            <person name="Rieger M."/>
            <person name="Salom D."/>
            <person name="Saluz H.P."/>
            <person name="Saiz J.E."/>
            <person name="Saren A.-M."/>
            <person name="Schaefer M."/>
            <person name="Scharfe M."/>
            <person name="Schmidt E.R."/>
            <person name="Schneider C."/>
            <person name="Scholler P."/>
            <person name="Schwarz S."/>
            <person name="Soler-Mira A."/>
            <person name="Urrestarazu L.A."/>
            <person name="Verhasselt P."/>
            <person name="Vissers S."/>
            <person name="Voet M."/>
            <person name="Volckaert G."/>
            <person name="Wagner G."/>
            <person name="Wambutt R."/>
            <person name="Wedler E."/>
            <person name="Wedler H."/>
            <person name="Woelfl S."/>
            <person name="Harris D.E."/>
            <person name="Bowman S."/>
            <person name="Brown D."/>
            <person name="Churcher C.M."/>
            <person name="Connor R."/>
            <person name="Dedman K."/>
            <person name="Gentles S."/>
            <person name="Hamlin N."/>
            <person name="Hunt S."/>
            <person name="Jones L."/>
            <person name="McDonald S."/>
            <person name="Murphy L.D."/>
            <person name="Niblett D."/>
            <person name="Odell C."/>
            <person name="Oliver K."/>
            <person name="Rajandream M.A."/>
            <person name="Richards C."/>
            <person name="Shore L."/>
            <person name="Walsh S.V."/>
            <person name="Barrell B.G."/>
            <person name="Dietrich F.S."/>
            <person name="Mulligan J.T."/>
            <person name="Allen E."/>
            <person name="Araujo R."/>
            <person name="Aviles E."/>
            <person name="Berno A."/>
            <person name="Carpenter J."/>
            <person name="Chen E."/>
            <person name="Cherry J.M."/>
            <person name="Chung E."/>
            <person name="Duncan M."/>
            <person name="Hunicke-Smith S."/>
            <person name="Hyman R.W."/>
            <person name="Komp C."/>
            <person name="Lashkari D."/>
            <person name="Lew H."/>
            <person name="Lin D."/>
            <person name="Mosedale D."/>
            <person name="Nakahara K."/>
            <person name="Namath A."/>
            <person name="Oefner P."/>
            <person name="Oh C."/>
            <person name="Petel F.X."/>
            <person name="Roberts D."/>
            <person name="Schramm S."/>
            <person name="Schroeder M."/>
            <person name="Shogren T."/>
            <person name="Shroff N."/>
            <person name="Winant A."/>
            <person name="Yelton M.A."/>
            <person name="Botstein D."/>
            <person name="Davis R.W."/>
            <person name="Johnston M."/>
            <person name="Andrews S."/>
            <person name="Brinkman R."/>
            <person name="Cooper J."/>
            <person name="Ding H."/>
            <person name="Du Z."/>
            <person name="Favello A."/>
            <person name="Fulton L."/>
            <person name="Gattung S."/>
            <person name="Greco T."/>
            <person name="Hallsworth K."/>
            <person name="Hawkins J."/>
            <person name="Hillier L.W."/>
            <person name="Jier M."/>
            <person name="Johnson D."/>
            <person name="Johnston L."/>
            <person name="Kirsten J."/>
            <person name="Kucaba T."/>
            <person name="Langston Y."/>
            <person name="Latreille P."/>
            <person name="Le T."/>
            <person name="Mardis E."/>
            <person name="Menezes S."/>
            <person name="Miller N."/>
            <person name="Nhan M."/>
            <person name="Pauley A."/>
            <person name="Peluso D."/>
            <person name="Rifkin L."/>
            <person name="Riles L."/>
            <person name="Taich A."/>
            <person name="Trevaskis E."/>
            <person name="Vignati D."/>
            <person name="Wilcox L."/>
            <person name="Wohldman P."/>
            <person name="Vaudin M."/>
            <person name="Wilson R."/>
            <person name="Waterston R."/>
            <person name="Albermann K."/>
            <person name="Hani J."/>
            <person name="Heumann K."/>
            <person name="Kleine K."/>
            <person name="Mewes H.-W."/>
            <person name="Zollner A."/>
            <person name="Zaccaria P."/>
        </authorList>
    </citation>
    <scope>NUCLEOTIDE SEQUENCE [LARGE SCALE GENOMIC DNA]</scope>
    <source>
        <strain>ATCC 204508 / S288c</strain>
    </source>
</reference>
<reference key="3">
    <citation type="journal article" date="2014" name="G3 (Bethesda)">
        <title>The reference genome sequence of Saccharomyces cerevisiae: Then and now.</title>
        <authorList>
            <person name="Engel S.R."/>
            <person name="Dietrich F.S."/>
            <person name="Fisk D.G."/>
            <person name="Binkley G."/>
            <person name="Balakrishnan R."/>
            <person name="Costanzo M.C."/>
            <person name="Dwight S.S."/>
            <person name="Hitz B.C."/>
            <person name="Karra K."/>
            <person name="Nash R.S."/>
            <person name="Weng S."/>
            <person name="Wong E.D."/>
            <person name="Lloyd P."/>
            <person name="Skrzypek M.S."/>
            <person name="Miyasato S.R."/>
            <person name="Simison M."/>
            <person name="Cherry J.M."/>
        </authorList>
    </citation>
    <scope>GENOME REANNOTATION</scope>
    <source>
        <strain>ATCC 204508 / S288c</strain>
    </source>
</reference>
<reference key="4">
    <citation type="journal article" date="2003" name="Nature">
        <title>Global analysis of protein expression in yeast.</title>
        <authorList>
            <person name="Ghaemmaghami S."/>
            <person name="Huh W.-K."/>
            <person name="Bower K."/>
            <person name="Howson R.W."/>
            <person name="Belle A."/>
            <person name="Dephoure N."/>
            <person name="O'Shea E.K."/>
            <person name="Weissman J.S."/>
        </authorList>
    </citation>
    <scope>LEVEL OF PROTEIN EXPRESSION [LARGE SCALE ANALYSIS]</scope>
</reference>
<reference key="5">
    <citation type="journal article" date="2007" name="J. Proteome Res.">
        <title>Large-scale phosphorylation analysis of alpha-factor-arrested Saccharomyces cerevisiae.</title>
        <authorList>
            <person name="Li X."/>
            <person name="Gerber S.A."/>
            <person name="Rudner A.D."/>
            <person name="Beausoleil S.A."/>
            <person name="Haas W."/>
            <person name="Villen J."/>
            <person name="Elias J.E."/>
            <person name="Gygi S.P."/>
        </authorList>
    </citation>
    <scope>PHOSPHORYLATION [LARGE SCALE ANALYSIS] AT SER-659</scope>
    <scope>IDENTIFICATION BY MASS SPECTROMETRY [LARGE SCALE ANALYSIS]</scope>
    <source>
        <strain>ADR376</strain>
    </source>
</reference>
<reference key="6">
    <citation type="journal article" date="2008" name="Mol. Cell. Proteomics">
        <title>A multidimensional chromatography technology for in-depth phosphoproteome analysis.</title>
        <authorList>
            <person name="Albuquerque C.P."/>
            <person name="Smolka M.B."/>
            <person name="Payne S.H."/>
            <person name="Bafna V."/>
            <person name="Eng J."/>
            <person name="Zhou H."/>
        </authorList>
    </citation>
    <scope>PHOSPHORYLATION [LARGE SCALE ANALYSIS] AT SER-659 AND SER-767</scope>
    <scope>IDENTIFICATION BY MASS SPECTROMETRY [LARGE SCALE ANALYSIS]</scope>
</reference>
<reference key="7">
    <citation type="journal article" date="2009" name="Science">
        <title>Global analysis of Cdk1 substrate phosphorylation sites provides insights into evolution.</title>
        <authorList>
            <person name="Holt L.J."/>
            <person name="Tuch B.B."/>
            <person name="Villen J."/>
            <person name="Johnson A.D."/>
            <person name="Gygi S.P."/>
            <person name="Morgan D.O."/>
        </authorList>
    </citation>
    <scope>PHOSPHORYLATION [LARGE SCALE ANALYSIS] AT SER-659 AND SER-732</scope>
    <scope>IDENTIFICATION BY MASS SPECTROMETRY [LARGE SCALE ANALYSIS]</scope>
</reference>
<keyword id="KW-0175">Coiled coil</keyword>
<keyword id="KW-0597">Phosphoprotein</keyword>
<keyword id="KW-1185">Reference proteome</keyword>
<comment type="function">
    <text>Not known. It is a suppressor of protein phosphatase 2A depletion.</text>
</comment>
<comment type="interaction">
    <interactant intactId="EBI-12870">
        <id>P37304</id>
    </interactant>
    <interactant intactId="EBI-37683">
        <id>Q03306</id>
        <label>PKH3</label>
    </interactant>
    <organismsDiffer>false</organismsDiffer>
    <experiments>3</experiments>
</comment>
<comment type="miscellaneous">
    <text evidence="2">Present with 300 molecules/cell in log phase SD medium.</text>
</comment>
<comment type="similarity">
    <text evidence="3">Belongs to the PAM1/SVL3 family.</text>
</comment>
<name>PAM1_YEAST</name>
<gene>
    <name type="primary">PAM1</name>
    <name type="ordered locus">YDR251W</name>
    <name type="ORF">YD8419.18</name>
    <name type="ORF">YD9320A.01</name>
</gene>
<feature type="chain" id="PRO_0000058220" description="Protein PAM1">
    <location>
        <begin position="1"/>
        <end position="830"/>
    </location>
</feature>
<feature type="region of interest" description="Disordered" evidence="1">
    <location>
        <begin position="426"/>
        <end position="488"/>
    </location>
</feature>
<feature type="region of interest" description="Disordered" evidence="1">
    <location>
        <begin position="513"/>
        <end position="558"/>
    </location>
</feature>
<feature type="region of interest" description="Disordered" evidence="1">
    <location>
        <begin position="648"/>
        <end position="699"/>
    </location>
</feature>
<feature type="region of interest" description="Disordered" evidence="1">
    <location>
        <begin position="727"/>
        <end position="757"/>
    </location>
</feature>
<feature type="region of interest" description="Disordered" evidence="1">
    <location>
        <begin position="796"/>
        <end position="830"/>
    </location>
</feature>
<feature type="coiled-coil region">
    <location>
        <begin position="379"/>
        <end position="400"/>
    </location>
</feature>
<feature type="coiled-coil region">
    <location>
        <begin position="481"/>
        <end position="514"/>
    </location>
</feature>
<feature type="compositionally biased region" description="Polar residues" evidence="1">
    <location>
        <begin position="433"/>
        <end position="444"/>
    </location>
</feature>
<feature type="compositionally biased region" description="Low complexity" evidence="1">
    <location>
        <begin position="513"/>
        <end position="527"/>
    </location>
</feature>
<feature type="compositionally biased region" description="Low complexity" evidence="1">
    <location>
        <begin position="538"/>
        <end position="555"/>
    </location>
</feature>
<feature type="compositionally biased region" description="Polar residues" evidence="1">
    <location>
        <begin position="651"/>
        <end position="699"/>
    </location>
</feature>
<feature type="compositionally biased region" description="Low complexity" evidence="1">
    <location>
        <begin position="738"/>
        <end position="753"/>
    </location>
</feature>
<feature type="compositionally biased region" description="Polar residues" evidence="1">
    <location>
        <begin position="796"/>
        <end position="806"/>
    </location>
</feature>
<feature type="compositionally biased region" description="Basic and acidic residues" evidence="1">
    <location>
        <begin position="807"/>
        <end position="816"/>
    </location>
</feature>
<feature type="compositionally biased region" description="Basic residues" evidence="1">
    <location>
        <begin position="817"/>
        <end position="830"/>
    </location>
</feature>
<feature type="modified residue" description="Phosphoserine" evidence="4 5 6">
    <location>
        <position position="659"/>
    </location>
</feature>
<feature type="modified residue" description="Phosphoserine" evidence="6">
    <location>
        <position position="732"/>
    </location>
</feature>
<feature type="modified residue" description="Phosphoserine" evidence="5">
    <location>
        <position position="767"/>
    </location>
</feature>
<feature type="sequence conflict" description="In Ref. 1; CAA51833." evidence="3" ref="1">
    <original>S</original>
    <variation>T</variation>
    <location>
        <position position="256"/>
    </location>
</feature>
<sequence>MTSALRVLVCGDHPNLILYTSRFQHAKNIEFYLVNNSKNANYEVSSLFYGTERFQIQNHFQSLLDLVDLNNENGGLVFDLIIMSASSLQEIPQVLRDIKPMMNKTTKILFESSGFIYLEPFIKASVDLSLSNIFSIFTDYDIRRLDNGSYKQFTTANAKSFSVSIGQTTSVHENSYSSDIIPILNTFQKLFQKLFPRDVVTLYDHSPSAFLAKEWELALPQICFDPLLIILEEKNPSTLDDHVLAKPLISGLLGESLLIIKKMGIAMNNPNFQNEQTILKHWKNKCEDLPDGPALLYNFIHKASSLNIDLLLLQPILLADDFGVKTPYLECLFTMMTQYQLLNKGDSEWFIRKDENTALTRVDDLQNSIALKDGKIMQLQNSESTLKNEIKELQSQVLSLKQEVSSSKANNGQELEILKKKVQMGDNSLFDRPNSNTNGISPSDNIVDVDLNYERSDQGNNSSGNDSRRQSFFNSTSDTTLSRDETSLKERELEVRMKELELQERELELQRKALQQQQQYQQRPPKQVYSGPSGTPTSGNNNNKSYNPNRKSSYSQPQHVAMMTSRGLHGPSAASSSPVISANNFVDPVSSGTPYSSNSSRFSQQIPSQQYMHTVKPTSRKNRSSVMPNIGYVPGLTNNEYGRKFNGNGMNGTQSRLNSLSNQSTFRSQQGPPITQQKSFQNNGGSMRTNRIPSANYNISNQQSGFVNSISSPNLSNLENRNTVQNSRNADSAPCVNQLNSDSPPQLQSLSQNGTSKVPQINITQPSPIQTNFATSDNPAAVIKLGTPSEDTVSAAATANNISTMGDESRKEDVKEKKKKKFSFFGKRKK</sequence>
<proteinExistence type="evidence at protein level"/>
<accession>P37304</accession>
<accession>D6VSN1</accession>
<accession>Q03789</accession>
<evidence type="ECO:0000256" key="1">
    <source>
        <dbReference type="SAM" id="MobiDB-lite"/>
    </source>
</evidence>
<evidence type="ECO:0000269" key="2">
    <source>
    </source>
</evidence>
<evidence type="ECO:0000305" key="3"/>
<evidence type="ECO:0007744" key="4">
    <source>
    </source>
</evidence>
<evidence type="ECO:0007744" key="5">
    <source>
    </source>
</evidence>
<evidence type="ECO:0007744" key="6">
    <source>
    </source>
</evidence>
<organism>
    <name type="scientific">Saccharomyces cerevisiae (strain ATCC 204508 / S288c)</name>
    <name type="common">Baker's yeast</name>
    <dbReference type="NCBI Taxonomy" id="559292"/>
    <lineage>
        <taxon>Eukaryota</taxon>
        <taxon>Fungi</taxon>
        <taxon>Dikarya</taxon>
        <taxon>Ascomycota</taxon>
        <taxon>Saccharomycotina</taxon>
        <taxon>Saccharomycetes</taxon>
        <taxon>Saccharomycetales</taxon>
        <taxon>Saccharomycetaceae</taxon>
        <taxon>Saccharomyces</taxon>
    </lineage>
</organism>
<dbReference type="EMBL" id="X73454">
    <property type="protein sequence ID" value="CAA51833.1"/>
    <property type="molecule type" value="Genomic_DNA"/>
</dbReference>
<dbReference type="EMBL" id="Z49701">
    <property type="protein sequence ID" value="CAA89737.1"/>
    <property type="molecule type" value="Genomic_DNA"/>
</dbReference>
<dbReference type="EMBL" id="Z70202">
    <property type="protein sequence ID" value="CAA94090.1"/>
    <property type="molecule type" value="Genomic_DNA"/>
</dbReference>
<dbReference type="EMBL" id="Z68329">
    <property type="protein sequence ID" value="CAA92708.1"/>
    <property type="molecule type" value="Genomic_DNA"/>
</dbReference>
<dbReference type="EMBL" id="BK006938">
    <property type="protein sequence ID" value="DAA12091.1"/>
    <property type="molecule type" value="Genomic_DNA"/>
</dbReference>
<dbReference type="PIR" id="S54547">
    <property type="entry name" value="S54547"/>
</dbReference>
<dbReference type="RefSeq" id="NP_010537.3">
    <property type="nucleotide sequence ID" value="NM_001180559.3"/>
</dbReference>
<dbReference type="SMR" id="P37304"/>
<dbReference type="BioGRID" id="32301">
    <property type="interactions" value="107"/>
</dbReference>
<dbReference type="DIP" id="DIP-5213N"/>
<dbReference type="FunCoup" id="P37304">
    <property type="interactions" value="175"/>
</dbReference>
<dbReference type="IntAct" id="P37304">
    <property type="interactions" value="14"/>
</dbReference>
<dbReference type="MINT" id="P37304"/>
<dbReference type="STRING" id="4932.YDR251W"/>
<dbReference type="GlyGen" id="P37304">
    <property type="glycosylation" value="4 sites, 1 O-linked glycan (4 sites)"/>
</dbReference>
<dbReference type="iPTMnet" id="P37304"/>
<dbReference type="PaxDb" id="4932-YDR251W"/>
<dbReference type="PeptideAtlas" id="P37304"/>
<dbReference type="EnsemblFungi" id="YDR251W_mRNA">
    <property type="protein sequence ID" value="YDR251W"/>
    <property type="gene ID" value="YDR251W"/>
</dbReference>
<dbReference type="GeneID" id="851838"/>
<dbReference type="KEGG" id="sce:YDR251W"/>
<dbReference type="AGR" id="SGD:S000002659"/>
<dbReference type="SGD" id="S000002659">
    <property type="gene designation" value="PAM1"/>
</dbReference>
<dbReference type="VEuPathDB" id="FungiDB:YDR251W"/>
<dbReference type="eggNOG" id="ENOG502QT3Z">
    <property type="taxonomic scope" value="Eukaryota"/>
</dbReference>
<dbReference type="GeneTree" id="ENSGT00940000176320"/>
<dbReference type="HOGENOM" id="CLU_010717_0_0_1"/>
<dbReference type="InParanoid" id="P37304"/>
<dbReference type="OMA" id="VHENSYS"/>
<dbReference type="OrthoDB" id="5302359at2759"/>
<dbReference type="BioCyc" id="YEAST:G3O-29823-MONOMER"/>
<dbReference type="BioGRID-ORCS" id="851838">
    <property type="hits" value="1 hit in 10 CRISPR screens"/>
</dbReference>
<dbReference type="PRO" id="PR:P37304"/>
<dbReference type="Proteomes" id="UP000002311">
    <property type="component" value="Chromosome IV"/>
</dbReference>
<dbReference type="RNAct" id="P37304">
    <property type="molecule type" value="protein"/>
</dbReference>
<dbReference type="GO" id="GO:0005933">
    <property type="term" value="C:cellular bud"/>
    <property type="evidence" value="ECO:0007005"/>
    <property type="project" value="SGD"/>
</dbReference>
<dbReference type="GO" id="GO:0005935">
    <property type="term" value="C:cellular bud neck"/>
    <property type="evidence" value="ECO:0000314"/>
    <property type="project" value="SGD"/>
</dbReference>
<dbReference type="GO" id="GO:0005934">
    <property type="term" value="C:cellular bud tip"/>
    <property type="evidence" value="ECO:0000314"/>
    <property type="project" value="SGD"/>
</dbReference>
<dbReference type="GO" id="GO:0005737">
    <property type="term" value="C:cytoplasm"/>
    <property type="evidence" value="ECO:0000318"/>
    <property type="project" value="GO_Central"/>
</dbReference>
<dbReference type="GO" id="GO:0007124">
    <property type="term" value="P:pseudohyphal growth"/>
    <property type="evidence" value="ECO:0000315"/>
    <property type="project" value="SGD"/>
</dbReference>
<dbReference type="FunFam" id="1.10.1040.10:FF:000033">
    <property type="entry name" value="PAM1p protein"/>
    <property type="match status" value="1"/>
</dbReference>
<dbReference type="Gene3D" id="1.10.1040.10">
    <property type="entry name" value="N-(1-d-carboxylethyl)-l-norvaline Dehydrogenase, domain 2"/>
    <property type="match status" value="1"/>
</dbReference>
<dbReference type="InterPro" id="IPR013328">
    <property type="entry name" value="6PGD_dom2"/>
</dbReference>
<dbReference type="InterPro" id="IPR013752">
    <property type="entry name" value="KPA_reductase"/>
</dbReference>
<dbReference type="InterPro" id="IPR051402">
    <property type="entry name" value="KPR-Related"/>
</dbReference>
<dbReference type="PANTHER" id="PTHR21708">
    <property type="entry name" value="PROBABLE 2-DEHYDROPANTOATE 2-REDUCTASE"/>
    <property type="match status" value="1"/>
</dbReference>
<dbReference type="PANTHER" id="PTHR21708:SF25">
    <property type="entry name" value="PROTEIN PAM1-RELATED"/>
    <property type="match status" value="1"/>
</dbReference>
<dbReference type="Pfam" id="PF08546">
    <property type="entry name" value="ApbA_C"/>
    <property type="match status" value="1"/>
</dbReference>